<accession>B9M0M7</accession>
<keyword id="KW-0067">ATP-binding</keyword>
<keyword id="KW-0436">Ligase</keyword>
<keyword id="KW-0479">Metal-binding</keyword>
<keyword id="KW-0547">Nucleotide-binding</keyword>
<keyword id="KW-0671">Queuosine biosynthesis</keyword>
<keyword id="KW-1185">Reference proteome</keyword>
<keyword id="KW-0862">Zinc</keyword>
<sequence length="229" mass="24383">MKKKAVILYSGGLDSTTCMAIAREEGFEPYAMSFDYGQRHSVELATAKANAKTMGASEHLVVSFDLRKVGGSALTADLDVPKEGIGAGIPVTYVPARNTIFLSFALGWAEVLGAFDIFIGVNALDYSGYPDCRPEYIAAFEATANLATRAGVEGTGRFVIHAPLIAMTKAEIIRKGLALGVDYGRTHSCYDPTPEGLACGLCDSCRLRLKGFAEAGVTDPVPYAVRSKK</sequence>
<evidence type="ECO:0000255" key="1">
    <source>
        <dbReference type="HAMAP-Rule" id="MF_01633"/>
    </source>
</evidence>
<reference key="1">
    <citation type="submission" date="2009-01" db="EMBL/GenBank/DDBJ databases">
        <title>Complete sequence of Geobacter sp. FRC-32.</title>
        <authorList>
            <consortium name="US DOE Joint Genome Institute"/>
            <person name="Lucas S."/>
            <person name="Copeland A."/>
            <person name="Lapidus A."/>
            <person name="Glavina del Rio T."/>
            <person name="Dalin E."/>
            <person name="Tice H."/>
            <person name="Bruce D."/>
            <person name="Goodwin L."/>
            <person name="Pitluck S."/>
            <person name="Saunders E."/>
            <person name="Brettin T."/>
            <person name="Detter J.C."/>
            <person name="Han C."/>
            <person name="Larimer F."/>
            <person name="Land M."/>
            <person name="Hauser L."/>
            <person name="Kyrpides N."/>
            <person name="Ovchinnikova G."/>
            <person name="Kostka J."/>
            <person name="Richardson P."/>
        </authorList>
    </citation>
    <scope>NUCLEOTIDE SEQUENCE [LARGE SCALE GENOMIC DNA]</scope>
    <source>
        <strain>DSM 22248 / JCM 15807 / FRC-32</strain>
    </source>
</reference>
<name>QUEC_GEODF</name>
<proteinExistence type="inferred from homology"/>
<dbReference type="EC" id="6.3.4.20" evidence="1"/>
<dbReference type="EMBL" id="CP001390">
    <property type="protein sequence ID" value="ACM19064.1"/>
    <property type="molecule type" value="Genomic_DNA"/>
</dbReference>
<dbReference type="RefSeq" id="WP_012645793.1">
    <property type="nucleotide sequence ID" value="NC_011979.1"/>
</dbReference>
<dbReference type="SMR" id="B9M0M7"/>
<dbReference type="STRING" id="316067.Geob_0700"/>
<dbReference type="KEGG" id="geo:Geob_0700"/>
<dbReference type="eggNOG" id="COG0603">
    <property type="taxonomic scope" value="Bacteria"/>
</dbReference>
<dbReference type="HOGENOM" id="CLU_081854_1_1_7"/>
<dbReference type="OrthoDB" id="9789567at2"/>
<dbReference type="UniPathway" id="UPA00391"/>
<dbReference type="Proteomes" id="UP000007721">
    <property type="component" value="Chromosome"/>
</dbReference>
<dbReference type="GO" id="GO:0005524">
    <property type="term" value="F:ATP binding"/>
    <property type="evidence" value="ECO:0007669"/>
    <property type="project" value="UniProtKB-UniRule"/>
</dbReference>
<dbReference type="GO" id="GO:0016879">
    <property type="term" value="F:ligase activity, forming carbon-nitrogen bonds"/>
    <property type="evidence" value="ECO:0007669"/>
    <property type="project" value="UniProtKB-UniRule"/>
</dbReference>
<dbReference type="GO" id="GO:0008270">
    <property type="term" value="F:zinc ion binding"/>
    <property type="evidence" value="ECO:0007669"/>
    <property type="project" value="UniProtKB-UniRule"/>
</dbReference>
<dbReference type="GO" id="GO:0008616">
    <property type="term" value="P:queuosine biosynthetic process"/>
    <property type="evidence" value="ECO:0007669"/>
    <property type="project" value="UniProtKB-UniRule"/>
</dbReference>
<dbReference type="CDD" id="cd01995">
    <property type="entry name" value="QueC-like"/>
    <property type="match status" value="1"/>
</dbReference>
<dbReference type="FunFam" id="3.40.50.620:FF:000131">
    <property type="entry name" value="7-cyano-7-deazaguanine synthase"/>
    <property type="match status" value="1"/>
</dbReference>
<dbReference type="Gene3D" id="3.40.50.620">
    <property type="entry name" value="HUPs"/>
    <property type="match status" value="1"/>
</dbReference>
<dbReference type="HAMAP" id="MF_01633">
    <property type="entry name" value="QueC"/>
    <property type="match status" value="1"/>
</dbReference>
<dbReference type="InterPro" id="IPR018317">
    <property type="entry name" value="QueC"/>
</dbReference>
<dbReference type="InterPro" id="IPR014729">
    <property type="entry name" value="Rossmann-like_a/b/a_fold"/>
</dbReference>
<dbReference type="NCBIfam" id="TIGR00364">
    <property type="entry name" value="7-cyano-7-deazaguanine synthase QueC"/>
    <property type="match status" value="1"/>
</dbReference>
<dbReference type="PANTHER" id="PTHR42914">
    <property type="entry name" value="7-CYANO-7-DEAZAGUANINE SYNTHASE"/>
    <property type="match status" value="1"/>
</dbReference>
<dbReference type="PANTHER" id="PTHR42914:SF1">
    <property type="entry name" value="7-CYANO-7-DEAZAGUANINE SYNTHASE"/>
    <property type="match status" value="1"/>
</dbReference>
<dbReference type="Pfam" id="PF06508">
    <property type="entry name" value="QueC"/>
    <property type="match status" value="1"/>
</dbReference>
<dbReference type="PIRSF" id="PIRSF006293">
    <property type="entry name" value="ExsB"/>
    <property type="match status" value="1"/>
</dbReference>
<dbReference type="SUPFAM" id="SSF52402">
    <property type="entry name" value="Adenine nucleotide alpha hydrolases-like"/>
    <property type="match status" value="1"/>
</dbReference>
<organism>
    <name type="scientific">Geotalea daltonii (strain DSM 22248 / JCM 15807 / FRC-32)</name>
    <name type="common">Geobacter daltonii</name>
    <dbReference type="NCBI Taxonomy" id="316067"/>
    <lineage>
        <taxon>Bacteria</taxon>
        <taxon>Pseudomonadati</taxon>
        <taxon>Thermodesulfobacteriota</taxon>
        <taxon>Desulfuromonadia</taxon>
        <taxon>Geobacterales</taxon>
        <taxon>Geobacteraceae</taxon>
        <taxon>Geotalea</taxon>
    </lineage>
</organism>
<comment type="function">
    <text evidence="1">Catalyzes the ATP-dependent conversion of 7-carboxy-7-deazaguanine (CDG) to 7-cyano-7-deazaguanine (preQ(0)).</text>
</comment>
<comment type="catalytic activity">
    <reaction evidence="1">
        <text>7-carboxy-7-deazaguanine + NH4(+) + ATP = 7-cyano-7-deazaguanine + ADP + phosphate + H2O + H(+)</text>
        <dbReference type="Rhea" id="RHEA:27982"/>
        <dbReference type="ChEBI" id="CHEBI:15377"/>
        <dbReference type="ChEBI" id="CHEBI:15378"/>
        <dbReference type="ChEBI" id="CHEBI:28938"/>
        <dbReference type="ChEBI" id="CHEBI:30616"/>
        <dbReference type="ChEBI" id="CHEBI:43474"/>
        <dbReference type="ChEBI" id="CHEBI:45075"/>
        <dbReference type="ChEBI" id="CHEBI:61036"/>
        <dbReference type="ChEBI" id="CHEBI:456216"/>
        <dbReference type="EC" id="6.3.4.20"/>
    </reaction>
</comment>
<comment type="cofactor">
    <cofactor evidence="1">
        <name>Zn(2+)</name>
        <dbReference type="ChEBI" id="CHEBI:29105"/>
    </cofactor>
    <text evidence="1">Binds 1 zinc ion per subunit.</text>
</comment>
<comment type="pathway">
    <text evidence="1">Purine metabolism; 7-cyano-7-deazaguanine biosynthesis.</text>
</comment>
<comment type="similarity">
    <text evidence="1">Belongs to the QueC family.</text>
</comment>
<protein>
    <recommendedName>
        <fullName evidence="1">7-cyano-7-deazaguanine synthase</fullName>
        <ecNumber evidence="1">6.3.4.20</ecNumber>
    </recommendedName>
    <alternativeName>
        <fullName evidence="1">7-cyano-7-carbaguanine synthase</fullName>
    </alternativeName>
    <alternativeName>
        <fullName evidence="1">PreQ(0) synthase</fullName>
    </alternativeName>
    <alternativeName>
        <fullName evidence="1">Queuosine biosynthesis protein QueC</fullName>
    </alternativeName>
</protein>
<gene>
    <name evidence="1" type="primary">queC</name>
    <name type="ordered locus">Geob_0700</name>
</gene>
<feature type="chain" id="PRO_1000186602" description="7-cyano-7-deazaguanine synthase">
    <location>
        <begin position="1"/>
        <end position="229"/>
    </location>
</feature>
<feature type="binding site" evidence="1">
    <location>
        <begin position="9"/>
        <end position="19"/>
    </location>
    <ligand>
        <name>ATP</name>
        <dbReference type="ChEBI" id="CHEBI:30616"/>
    </ligand>
</feature>
<feature type="binding site" evidence="1">
    <location>
        <position position="189"/>
    </location>
    <ligand>
        <name>Zn(2+)</name>
        <dbReference type="ChEBI" id="CHEBI:29105"/>
    </ligand>
</feature>
<feature type="binding site" evidence="1">
    <location>
        <position position="199"/>
    </location>
    <ligand>
        <name>Zn(2+)</name>
        <dbReference type="ChEBI" id="CHEBI:29105"/>
    </ligand>
</feature>
<feature type="binding site" evidence="1">
    <location>
        <position position="202"/>
    </location>
    <ligand>
        <name>Zn(2+)</name>
        <dbReference type="ChEBI" id="CHEBI:29105"/>
    </ligand>
</feature>
<feature type="binding site" evidence="1">
    <location>
        <position position="205"/>
    </location>
    <ligand>
        <name>Zn(2+)</name>
        <dbReference type="ChEBI" id="CHEBI:29105"/>
    </ligand>
</feature>